<reference key="1">
    <citation type="submission" date="2008-01" db="EMBL/GenBank/DDBJ databases">
        <title>Complete sequence of Thermoanaerobacter sp. X514.</title>
        <authorList>
            <consortium name="US DOE Joint Genome Institute"/>
            <person name="Copeland A."/>
            <person name="Lucas S."/>
            <person name="Lapidus A."/>
            <person name="Barry K."/>
            <person name="Glavina del Rio T."/>
            <person name="Dalin E."/>
            <person name="Tice H."/>
            <person name="Pitluck S."/>
            <person name="Bruce D."/>
            <person name="Goodwin L."/>
            <person name="Saunders E."/>
            <person name="Brettin T."/>
            <person name="Detter J.C."/>
            <person name="Han C."/>
            <person name="Schmutz J."/>
            <person name="Larimer F."/>
            <person name="Land M."/>
            <person name="Hauser L."/>
            <person name="Kyrpides N."/>
            <person name="Kim E."/>
            <person name="Hemme C."/>
            <person name="Fields M.W."/>
            <person name="He Z."/>
            <person name="Zhou J."/>
            <person name="Richardson P."/>
        </authorList>
    </citation>
    <scope>NUCLEOTIDE SEQUENCE [LARGE SCALE GENOMIC DNA]</scope>
    <source>
        <strain>X514</strain>
    </source>
</reference>
<accession>B0K1A5</accession>
<name>HFQ_THEPX</name>
<proteinExistence type="inferred from homology"/>
<gene>
    <name evidence="1" type="primary">hfq</name>
    <name type="ordered locus">Teth514_1614</name>
</gene>
<organism>
    <name type="scientific">Thermoanaerobacter sp. (strain X514)</name>
    <dbReference type="NCBI Taxonomy" id="399726"/>
    <lineage>
        <taxon>Bacteria</taxon>
        <taxon>Bacillati</taxon>
        <taxon>Bacillota</taxon>
        <taxon>Clostridia</taxon>
        <taxon>Thermoanaerobacterales</taxon>
        <taxon>Thermoanaerobacteraceae</taxon>
        <taxon>Thermoanaerobacter</taxon>
    </lineage>
</organism>
<sequence>MASSKAAINLQDIFLNQVRKEHVPVTVYLINGFQLKGLVKGFDNFTVVLESENKQQLLIYKHAISTITPQKPVIFSASDKDEKREE</sequence>
<comment type="function">
    <text evidence="1">RNA chaperone that binds small regulatory RNA (sRNAs) and mRNAs to facilitate mRNA translational regulation in response to envelope stress, environmental stress and changes in metabolite concentrations. Also binds with high specificity to tRNAs.</text>
</comment>
<comment type="subunit">
    <text evidence="1">Homohexamer.</text>
</comment>
<comment type="similarity">
    <text evidence="1">Belongs to the Hfq family.</text>
</comment>
<keyword id="KW-0694">RNA-binding</keyword>
<keyword id="KW-0346">Stress response</keyword>
<protein>
    <recommendedName>
        <fullName evidence="1">RNA-binding protein Hfq</fullName>
    </recommendedName>
</protein>
<feature type="chain" id="PRO_1000190365" description="RNA-binding protein Hfq">
    <location>
        <begin position="1"/>
        <end position="86"/>
    </location>
</feature>
<feature type="domain" description="Sm" evidence="2">
    <location>
        <begin position="12"/>
        <end position="73"/>
    </location>
</feature>
<dbReference type="EMBL" id="CP000923">
    <property type="protein sequence ID" value="ABY92900.1"/>
    <property type="molecule type" value="Genomic_DNA"/>
</dbReference>
<dbReference type="RefSeq" id="WP_003866787.1">
    <property type="nucleotide sequence ID" value="NC_010320.1"/>
</dbReference>
<dbReference type="SMR" id="B0K1A5"/>
<dbReference type="KEGG" id="tex:Teth514_1614"/>
<dbReference type="HOGENOM" id="CLU_113688_0_2_9"/>
<dbReference type="Proteomes" id="UP000002155">
    <property type="component" value="Chromosome"/>
</dbReference>
<dbReference type="GO" id="GO:0005829">
    <property type="term" value="C:cytosol"/>
    <property type="evidence" value="ECO:0007669"/>
    <property type="project" value="TreeGrafter"/>
</dbReference>
<dbReference type="GO" id="GO:0003723">
    <property type="term" value="F:RNA binding"/>
    <property type="evidence" value="ECO:0007669"/>
    <property type="project" value="UniProtKB-UniRule"/>
</dbReference>
<dbReference type="GO" id="GO:0006355">
    <property type="term" value="P:regulation of DNA-templated transcription"/>
    <property type="evidence" value="ECO:0007669"/>
    <property type="project" value="InterPro"/>
</dbReference>
<dbReference type="GO" id="GO:0043487">
    <property type="term" value="P:regulation of RNA stability"/>
    <property type="evidence" value="ECO:0007669"/>
    <property type="project" value="TreeGrafter"/>
</dbReference>
<dbReference type="GO" id="GO:0045974">
    <property type="term" value="P:regulation of translation, ncRNA-mediated"/>
    <property type="evidence" value="ECO:0007669"/>
    <property type="project" value="TreeGrafter"/>
</dbReference>
<dbReference type="CDD" id="cd01716">
    <property type="entry name" value="Hfq"/>
    <property type="match status" value="1"/>
</dbReference>
<dbReference type="FunFam" id="2.30.30.100:FF:000012">
    <property type="entry name" value="RNA-binding protein Hfq"/>
    <property type="match status" value="1"/>
</dbReference>
<dbReference type="Gene3D" id="2.30.30.100">
    <property type="match status" value="1"/>
</dbReference>
<dbReference type="HAMAP" id="MF_00436">
    <property type="entry name" value="Hfq"/>
    <property type="match status" value="1"/>
</dbReference>
<dbReference type="InterPro" id="IPR005001">
    <property type="entry name" value="Hfq"/>
</dbReference>
<dbReference type="InterPro" id="IPR010920">
    <property type="entry name" value="LSM_dom_sf"/>
</dbReference>
<dbReference type="InterPro" id="IPR047575">
    <property type="entry name" value="Sm"/>
</dbReference>
<dbReference type="NCBIfam" id="TIGR02383">
    <property type="entry name" value="Hfq"/>
    <property type="match status" value="1"/>
</dbReference>
<dbReference type="NCBIfam" id="NF001602">
    <property type="entry name" value="PRK00395.1"/>
    <property type="match status" value="1"/>
</dbReference>
<dbReference type="PANTHER" id="PTHR34772">
    <property type="entry name" value="RNA-BINDING PROTEIN HFQ"/>
    <property type="match status" value="1"/>
</dbReference>
<dbReference type="PANTHER" id="PTHR34772:SF1">
    <property type="entry name" value="RNA-BINDING PROTEIN HFQ"/>
    <property type="match status" value="1"/>
</dbReference>
<dbReference type="Pfam" id="PF17209">
    <property type="entry name" value="Hfq"/>
    <property type="match status" value="1"/>
</dbReference>
<dbReference type="SUPFAM" id="SSF50182">
    <property type="entry name" value="Sm-like ribonucleoproteins"/>
    <property type="match status" value="1"/>
</dbReference>
<dbReference type="PROSITE" id="PS52002">
    <property type="entry name" value="SM"/>
    <property type="match status" value="1"/>
</dbReference>
<evidence type="ECO:0000255" key="1">
    <source>
        <dbReference type="HAMAP-Rule" id="MF_00436"/>
    </source>
</evidence>
<evidence type="ECO:0000255" key="2">
    <source>
        <dbReference type="PROSITE-ProRule" id="PRU01346"/>
    </source>
</evidence>